<feature type="signal peptide" evidence="1">
    <location>
        <begin position="1"/>
        <end position="29"/>
    </location>
</feature>
<feature type="chain" id="PRO_0000019567" description="Uncharacterized protein C19orf18">
    <location>
        <begin position="30"/>
        <end position="215"/>
    </location>
</feature>
<feature type="topological domain" description="Extracellular" evidence="1">
    <location>
        <begin position="30"/>
        <end position="100"/>
    </location>
</feature>
<feature type="transmembrane region" description="Helical" evidence="1">
    <location>
        <begin position="101"/>
        <end position="121"/>
    </location>
</feature>
<feature type="topological domain" description="Cytoplasmic" evidence="1">
    <location>
        <begin position="122"/>
        <end position="215"/>
    </location>
</feature>
<feature type="region of interest" description="Disordered" evidence="2">
    <location>
        <begin position="191"/>
        <end position="215"/>
    </location>
</feature>
<feature type="compositionally biased region" description="Polar residues" evidence="2">
    <location>
        <begin position="196"/>
        <end position="208"/>
    </location>
</feature>
<feature type="sequence variant" id="VAR_050909" description="In dbSNP:rs8110831.">
    <original>H</original>
    <variation>Y</variation>
    <location>
        <position position="208"/>
    </location>
</feature>
<organism>
    <name type="scientific">Homo sapiens</name>
    <name type="common">Human</name>
    <dbReference type="NCBI Taxonomy" id="9606"/>
    <lineage>
        <taxon>Eukaryota</taxon>
        <taxon>Metazoa</taxon>
        <taxon>Chordata</taxon>
        <taxon>Craniata</taxon>
        <taxon>Vertebrata</taxon>
        <taxon>Euteleostomi</taxon>
        <taxon>Mammalia</taxon>
        <taxon>Eutheria</taxon>
        <taxon>Euarchontoglires</taxon>
        <taxon>Primates</taxon>
        <taxon>Haplorrhini</taxon>
        <taxon>Catarrhini</taxon>
        <taxon>Hominidae</taxon>
        <taxon>Homo</taxon>
    </lineage>
</organism>
<name>CS018_HUMAN</name>
<protein>
    <recommendedName>
        <fullName>Uncharacterized protein C19orf18</fullName>
    </recommendedName>
</protein>
<keyword id="KW-0472">Membrane</keyword>
<keyword id="KW-1267">Proteomics identification</keyword>
<keyword id="KW-1185">Reference proteome</keyword>
<keyword id="KW-0732">Signal</keyword>
<keyword id="KW-0812">Transmembrane</keyword>
<keyword id="KW-1133">Transmembrane helix</keyword>
<gene>
    <name type="primary">C19orf18</name>
</gene>
<dbReference type="EMBL" id="BC033933">
    <property type="protein sequence ID" value="AAH33933.1"/>
    <property type="molecule type" value="mRNA"/>
</dbReference>
<dbReference type="CCDS" id="CCDS12967.1"/>
<dbReference type="RefSeq" id="NP_689687.1">
    <property type="nucleotide sequence ID" value="NM_152474.5"/>
</dbReference>
<dbReference type="SMR" id="Q8NEA5"/>
<dbReference type="BioGRID" id="127073">
    <property type="interactions" value="18"/>
</dbReference>
<dbReference type="FunCoup" id="Q8NEA5">
    <property type="interactions" value="1"/>
</dbReference>
<dbReference type="IntAct" id="Q8NEA5">
    <property type="interactions" value="11"/>
</dbReference>
<dbReference type="STRING" id="9606.ENSP00000321519"/>
<dbReference type="iPTMnet" id="Q8NEA5"/>
<dbReference type="PhosphoSitePlus" id="Q8NEA5"/>
<dbReference type="BioMuta" id="C19orf18"/>
<dbReference type="DMDM" id="71153224"/>
<dbReference type="MassIVE" id="Q8NEA5"/>
<dbReference type="PaxDb" id="9606-ENSP00000321519"/>
<dbReference type="PeptideAtlas" id="Q8NEA5"/>
<dbReference type="ProteomicsDB" id="73139"/>
<dbReference type="Antibodypedia" id="3045">
    <property type="antibodies" value="110 antibodies from 17 providers"/>
</dbReference>
<dbReference type="DNASU" id="147685"/>
<dbReference type="Ensembl" id="ENST00000314391.3">
    <property type="protein sequence ID" value="ENSP00000321519.2"/>
    <property type="gene ID" value="ENSG00000177025.3"/>
</dbReference>
<dbReference type="GeneID" id="147685"/>
<dbReference type="KEGG" id="hsa:147685"/>
<dbReference type="MANE-Select" id="ENST00000314391.3">
    <property type="protein sequence ID" value="ENSP00000321519.2"/>
    <property type="RefSeq nucleotide sequence ID" value="NM_152474.5"/>
    <property type="RefSeq protein sequence ID" value="NP_689687.1"/>
</dbReference>
<dbReference type="UCSC" id="uc002qqv.3">
    <property type="organism name" value="human"/>
</dbReference>
<dbReference type="AGR" id="HGNC:28642"/>
<dbReference type="CTD" id="147685"/>
<dbReference type="GeneCards" id="C19orf18"/>
<dbReference type="HGNC" id="HGNC:28642">
    <property type="gene designation" value="C19orf18"/>
</dbReference>
<dbReference type="HPA" id="ENSG00000177025">
    <property type="expression patterns" value="Tissue enhanced (choroid plexus, testis)"/>
</dbReference>
<dbReference type="neXtProt" id="NX_Q8NEA5"/>
<dbReference type="OpenTargets" id="ENSG00000177025"/>
<dbReference type="PharmGKB" id="PA134876425"/>
<dbReference type="VEuPathDB" id="HostDB:ENSG00000177025"/>
<dbReference type="eggNOG" id="ENOG502RU2V">
    <property type="taxonomic scope" value="Eukaryota"/>
</dbReference>
<dbReference type="GeneTree" id="ENSGT00390000018040"/>
<dbReference type="HOGENOM" id="CLU_112515_0_0_1"/>
<dbReference type="InParanoid" id="Q8NEA5"/>
<dbReference type="OMA" id="HLCLPYA"/>
<dbReference type="OrthoDB" id="9809430at2759"/>
<dbReference type="PAN-GO" id="Q8NEA5">
    <property type="GO annotations" value="0 GO annotations based on evolutionary models"/>
</dbReference>
<dbReference type="PhylomeDB" id="Q8NEA5"/>
<dbReference type="TreeFam" id="TF336996"/>
<dbReference type="PathwayCommons" id="Q8NEA5"/>
<dbReference type="SignaLink" id="Q8NEA5"/>
<dbReference type="BioGRID-ORCS" id="147685">
    <property type="hits" value="15 hits in 1132 CRISPR screens"/>
</dbReference>
<dbReference type="ChiTaRS" id="C19orf18">
    <property type="organism name" value="human"/>
</dbReference>
<dbReference type="GenomeRNAi" id="147685"/>
<dbReference type="Pharos" id="Q8NEA5">
    <property type="development level" value="Tdark"/>
</dbReference>
<dbReference type="PRO" id="PR:Q8NEA5"/>
<dbReference type="Proteomes" id="UP000005640">
    <property type="component" value="Chromosome 19"/>
</dbReference>
<dbReference type="RNAct" id="Q8NEA5">
    <property type="molecule type" value="protein"/>
</dbReference>
<dbReference type="Bgee" id="ENSG00000177025">
    <property type="expression patterns" value="Expressed in primordial germ cell in gonad and 125 other cell types or tissues"/>
</dbReference>
<dbReference type="GO" id="GO:0070062">
    <property type="term" value="C:extracellular exosome"/>
    <property type="evidence" value="ECO:0007005"/>
    <property type="project" value="UniProtKB"/>
</dbReference>
<dbReference type="GO" id="GO:0016020">
    <property type="term" value="C:membrane"/>
    <property type="evidence" value="ECO:0007669"/>
    <property type="project" value="UniProtKB-SubCell"/>
</dbReference>
<dbReference type="InterPro" id="IPR037549">
    <property type="entry name" value="C19orf18"/>
</dbReference>
<dbReference type="PANTHER" id="PTHR38000">
    <property type="entry name" value="RIKEN CDNA 2900092C05"/>
    <property type="match status" value="1"/>
</dbReference>
<dbReference type="PANTHER" id="PTHR38000:SF1">
    <property type="entry name" value="RIKEN CDNA 2900092C05 GENE"/>
    <property type="match status" value="1"/>
</dbReference>
<dbReference type="Pfam" id="PF17686">
    <property type="entry name" value="DUF5534"/>
    <property type="match status" value="1"/>
</dbReference>
<sequence>MDKVQSGFLILFLFLMECQLHLCLPYADGLHPTGNITGLPGSKRSQPPRNITKEPKVFFHKTQLPGIQGAASRSTAASPTNPMKFLRNKAIIRHRPALVKVILISSVAFSIALICGMAISYMIYRLAQAEERQQLESLYKNLRIPLLGDEEEGSEDEGESTHLLPENENELEKFIHSVIISKRSKNIKKKLKEEQNSVTENKTKNASHNGKMEDL</sequence>
<evidence type="ECO:0000255" key="1"/>
<evidence type="ECO:0000256" key="2">
    <source>
        <dbReference type="SAM" id="MobiDB-lite"/>
    </source>
</evidence>
<evidence type="ECO:0000305" key="3"/>
<reference key="1">
    <citation type="journal article" date="2004" name="Genome Res.">
        <title>The status, quality, and expansion of the NIH full-length cDNA project: the Mammalian Gene Collection (MGC).</title>
        <authorList>
            <consortium name="The MGC Project Team"/>
        </authorList>
    </citation>
    <scope>NUCLEOTIDE SEQUENCE [LARGE SCALE MRNA]</scope>
    <source>
        <tissue>Testis</tissue>
    </source>
</reference>
<proteinExistence type="evidence at protein level"/>
<comment type="interaction">
    <interactant intactId="EBI-18323646">
        <id>Q8NEA5</id>
    </interactant>
    <interactant intactId="EBI-714543">
        <id>Q15041</id>
        <label>ARL6IP1</label>
    </interactant>
    <organismsDiffer>false</organismsDiffer>
    <experiments>3</experiments>
</comment>
<comment type="interaction">
    <interactant intactId="EBI-18323646">
        <id>Q8NEA5</id>
    </interactant>
    <interactant intactId="EBI-725665">
        <id>Q9Y5U9</id>
        <label>IER3IP1</label>
    </interactant>
    <organismsDiffer>false</organismsDiffer>
    <experiments>3</experiments>
</comment>
<comment type="interaction">
    <interactant intactId="EBI-18323646">
        <id>Q8NEA5</id>
    </interactant>
    <interactant intactId="EBI-2858252">
        <id>Q6ZSS7</id>
        <label>MFSD6</label>
    </interactant>
    <organismsDiffer>false</organismsDiffer>
    <experiments>3</experiments>
</comment>
<comment type="subcellular location">
    <subcellularLocation>
        <location evidence="3">Membrane</location>
        <topology evidence="3">Single-pass type I membrane protein</topology>
    </subcellularLocation>
</comment>
<accession>Q8NEA5</accession>